<gene>
    <name evidence="1" type="primary">atg26</name>
    <name type="ORF">ACLA_092600</name>
</gene>
<accession>A1CFB3</accession>
<keyword id="KW-0072">Autophagy</keyword>
<keyword id="KW-0963">Cytoplasm</keyword>
<keyword id="KW-0328">Glycosyltransferase</keyword>
<keyword id="KW-0444">Lipid biosynthesis</keyword>
<keyword id="KW-0443">Lipid metabolism</keyword>
<keyword id="KW-0472">Membrane</keyword>
<keyword id="KW-0653">Protein transport</keyword>
<keyword id="KW-1185">Reference proteome</keyword>
<keyword id="KW-0677">Repeat</keyword>
<keyword id="KW-0752">Steroid biosynthesis</keyword>
<keyword id="KW-0753">Steroid metabolism</keyword>
<keyword id="KW-0756">Sterol biosynthesis</keyword>
<keyword id="KW-1207">Sterol metabolism</keyword>
<keyword id="KW-0808">Transferase</keyword>
<keyword id="KW-0813">Transport</keyword>
<organism>
    <name type="scientific">Aspergillus clavatus (strain ATCC 1007 / CBS 513.65 / DSM 816 / NCTC 3887 / NRRL 1 / QM 1276 / 107)</name>
    <dbReference type="NCBI Taxonomy" id="344612"/>
    <lineage>
        <taxon>Eukaryota</taxon>
        <taxon>Fungi</taxon>
        <taxon>Dikarya</taxon>
        <taxon>Ascomycota</taxon>
        <taxon>Pezizomycotina</taxon>
        <taxon>Eurotiomycetes</taxon>
        <taxon>Eurotiomycetidae</taxon>
        <taxon>Eurotiales</taxon>
        <taxon>Aspergillaceae</taxon>
        <taxon>Aspergillus</taxon>
        <taxon>Aspergillus subgen. Fumigati</taxon>
    </lineage>
</organism>
<feature type="chain" id="PRO_0000318039" description="Sterol 3-beta-glucosyltransferase">
    <location>
        <begin position="1"/>
        <end position="1406"/>
    </location>
</feature>
<feature type="domain" description="GRAM 1" evidence="3">
    <location>
        <begin position="236"/>
        <end position="286"/>
    </location>
</feature>
<feature type="domain" description="PH" evidence="4">
    <location>
        <begin position="286"/>
        <end position="385"/>
    </location>
</feature>
<feature type="domain" description="GRAM 2" evidence="3">
    <location>
        <begin position="730"/>
        <end position="796"/>
    </location>
</feature>
<feature type="region of interest" description="Disordered" evidence="5">
    <location>
        <begin position="83"/>
        <end position="231"/>
    </location>
</feature>
<feature type="region of interest" description="Disordered" evidence="5">
    <location>
        <begin position="457"/>
        <end position="558"/>
    </location>
</feature>
<feature type="region of interest" description="Disordered" evidence="5">
    <location>
        <begin position="576"/>
        <end position="622"/>
    </location>
</feature>
<feature type="region of interest" description="Disordered" evidence="5">
    <location>
        <begin position="1334"/>
        <end position="1406"/>
    </location>
</feature>
<feature type="compositionally biased region" description="Polar residues" evidence="5">
    <location>
        <begin position="110"/>
        <end position="128"/>
    </location>
</feature>
<feature type="compositionally biased region" description="Low complexity" evidence="5">
    <location>
        <begin position="209"/>
        <end position="231"/>
    </location>
</feature>
<feature type="compositionally biased region" description="Basic and acidic residues" evidence="5">
    <location>
        <begin position="468"/>
        <end position="478"/>
    </location>
</feature>
<feature type="compositionally biased region" description="Polar residues" evidence="5">
    <location>
        <begin position="490"/>
        <end position="499"/>
    </location>
</feature>
<feature type="compositionally biased region" description="Polar residues" evidence="5">
    <location>
        <begin position="531"/>
        <end position="548"/>
    </location>
</feature>
<feature type="compositionally biased region" description="Basic and acidic residues" evidence="5">
    <location>
        <begin position="576"/>
        <end position="587"/>
    </location>
</feature>
<feature type="compositionally biased region" description="Low complexity" evidence="5">
    <location>
        <begin position="1336"/>
        <end position="1349"/>
    </location>
</feature>
<feature type="compositionally biased region" description="Acidic residues" evidence="5">
    <location>
        <begin position="1355"/>
        <end position="1375"/>
    </location>
</feature>
<feature type="compositionally biased region" description="Basic and acidic residues" evidence="5">
    <location>
        <begin position="1376"/>
        <end position="1387"/>
    </location>
</feature>
<feature type="compositionally biased region" description="Polar residues" evidence="5">
    <location>
        <begin position="1397"/>
        <end position="1406"/>
    </location>
</feature>
<feature type="binding site" evidence="1">
    <location>
        <position position="917"/>
    </location>
    <ligand>
        <name>UDP-alpha-D-glucose</name>
        <dbReference type="ChEBI" id="CHEBI:58885"/>
    </ligand>
</feature>
<feature type="binding site" evidence="1">
    <location>
        <position position="918"/>
    </location>
    <ligand>
        <name>UDP-alpha-D-glucose</name>
        <dbReference type="ChEBI" id="CHEBI:58885"/>
    </ligand>
</feature>
<feature type="binding site" evidence="1">
    <location>
        <position position="920"/>
    </location>
    <ligand>
        <name>UDP-alpha-D-glucose</name>
        <dbReference type="ChEBI" id="CHEBI:58885"/>
    </ligand>
</feature>
<feature type="binding site" evidence="1">
    <location>
        <position position="1220"/>
    </location>
    <ligand>
        <name>UDP-alpha-D-glucose</name>
        <dbReference type="ChEBI" id="CHEBI:58885"/>
    </ligand>
</feature>
<feature type="binding site" evidence="1">
    <location>
        <position position="1222"/>
    </location>
    <ligand>
        <name>UDP-alpha-D-glucose</name>
        <dbReference type="ChEBI" id="CHEBI:58885"/>
    </ligand>
</feature>
<feature type="binding site" evidence="1">
    <location>
        <position position="1235"/>
    </location>
    <ligand>
        <name>UDP-alpha-D-glucose</name>
        <dbReference type="ChEBI" id="CHEBI:58885"/>
    </ligand>
</feature>
<feature type="binding site" evidence="1">
    <location>
        <position position="1239"/>
    </location>
    <ligand>
        <name>UDP-alpha-D-glucose</name>
        <dbReference type="ChEBI" id="CHEBI:58885"/>
    </ligand>
</feature>
<feature type="binding site" evidence="1">
    <location>
        <position position="1240"/>
    </location>
    <ligand>
        <name>UDP-alpha-D-glucose</name>
        <dbReference type="ChEBI" id="CHEBI:58885"/>
    </ligand>
</feature>
<feature type="binding site" evidence="1">
    <location>
        <position position="1259"/>
    </location>
    <ligand>
        <name>UDP-alpha-D-glucose</name>
        <dbReference type="ChEBI" id="CHEBI:58885"/>
    </ligand>
</feature>
<feature type="binding site" evidence="1">
    <location>
        <position position="1260"/>
    </location>
    <ligand>
        <name>UDP-alpha-D-glucose</name>
        <dbReference type="ChEBI" id="CHEBI:58885"/>
    </ligand>
</feature>
<evidence type="ECO:0000250" key="1">
    <source>
        <dbReference type="UniProtKB" id="Q06321"/>
    </source>
</evidence>
<evidence type="ECO:0000250" key="2">
    <source>
        <dbReference type="UniProtKB" id="Q2U0C3"/>
    </source>
</evidence>
<evidence type="ECO:0000255" key="3"/>
<evidence type="ECO:0000255" key="4">
    <source>
        <dbReference type="PROSITE-ProRule" id="PRU00145"/>
    </source>
</evidence>
<evidence type="ECO:0000256" key="5">
    <source>
        <dbReference type="SAM" id="MobiDB-lite"/>
    </source>
</evidence>
<evidence type="ECO:0000305" key="6"/>
<sequence>MRPFLDDAKRRVDRRLSASKQSISTSRLLPSVLPDRFKDNHDAQVDFTAPPGGVGSREGHMQYMQQSIFSMIAAVGSRSDFHARFDESSDSDGETEGRSQTESPVKKVLGSSNPVNSQTEQRSGSQTSRKSEKDQSSRGRHHRRTISDHKFLRPFKTSSKPEPDTEPSTGDERLRVTLPRRPRSTTPRAAPILSRMVEAQAQFDSKTPSAGRSQNSSQESSIHSSHESSTSPLSTRLMEMFDFNKPEKVLVEYACSLLQSMLLQGYMYVTEGHICFYAYLPRKSTVAIKSGYLHKRGRKNPKYNRYWFSLKGDVLSYYADPSNLYFPSGHVDLRYGISASLAESKEKGREPKEFQVSTDQRTYHFRADSSVSAKEWVKALQKVIFRTHNEGDSVKVSFPIENIIDIEESPMMDFADTFKIRVVEDDDSYAIDEYFFSFFDSGREALTLLKSLVNENASGHSSRTLSPHADRSPRSDRTRRSRNRWSLTSGTSQPGNGSADTHRKRSASTSHLSLGPDAIPTSPVTRHQDPSESILNSFEQGTESSAVWQSMEDGAESASQILHRSDVFQSPTIHNLDKRACSDERSGRRQAGGTARSTLTHVNANKDGSPGEYSKLGNDGKPDREIRHVIHELDQETQGPSKPGPGAPTLNELVKAGTYPLQRAAGFAEYLRTRSKQMSNLLASESMGYIEKVSGMWVGGRRHYGEAEDVLPDDQAVDPEDKEDGCNYGDRFRAHFALPSTEKLQATYFAYLHRVLPLYGKIYISQKKLCFRSLIPGTRTKMILPLKDVENVEKEKGFRFGYQGLVIIIRGHEELFFEFRTSDARDDCAVTLHQHLESVKYLAESGLLAEQEKDESEAAMAEHRMLQEARLDDYGENDIPPLNESSGLHPIFDDPRASIVNFKPAESLRITCLTIGSRGDVQPYIALCKGLLAEGHKPKIATHAEFEPWVRRHGIDFAPVDGDPAELMRICVENGMFTYSFLKEASQKFRGWIDDLLSSAWASCQDSDLLIESPSAMAGIHIAEALRIPYFRAFTMPWSRTRAYPHAFAVPEHKMGGAYNYITYVMFDNVFWKAIAGQVNRWRKNELGLKATTLDKMQPNKVPFLYNYSPSVVPPPLDYPDWIRITGYWFLNEGVDWTPPVDLSAFIQRAREDDKKIVYIGFGSIVVSDPSALTRTVIESVQKADVRCILSKGWSDRLGDPSSAKTEVPLPPEIFQIQAAPHDWLFAQVDAAVHHGGAGTTGASLRAGIPTIIKPFFGDQFFFGSRIEDLGVGICMKKLNVSVFSRALWEATHSERMIIRARDLGAKIRDEDGVATAIQAIYRDLEHAKTLAQQRSIASSTPFSPTPSAKNTAEQGDDDVEDSEEWTFVGDDNEMDMSRRMRDRAISDAEMLPDRLLTNSIHGAGR</sequence>
<name>ATG26_ASPCL</name>
<reference key="1">
    <citation type="journal article" date="2008" name="PLoS Genet.">
        <title>Genomic islands in the pathogenic filamentous fungus Aspergillus fumigatus.</title>
        <authorList>
            <person name="Fedorova N.D."/>
            <person name="Khaldi N."/>
            <person name="Joardar V.S."/>
            <person name="Maiti R."/>
            <person name="Amedeo P."/>
            <person name="Anderson M.J."/>
            <person name="Crabtree J."/>
            <person name="Silva J.C."/>
            <person name="Badger J.H."/>
            <person name="Albarraq A."/>
            <person name="Angiuoli S."/>
            <person name="Bussey H."/>
            <person name="Bowyer P."/>
            <person name="Cotty P.J."/>
            <person name="Dyer P.S."/>
            <person name="Egan A."/>
            <person name="Galens K."/>
            <person name="Fraser-Liggett C.M."/>
            <person name="Haas B.J."/>
            <person name="Inman J.M."/>
            <person name="Kent R."/>
            <person name="Lemieux S."/>
            <person name="Malavazi I."/>
            <person name="Orvis J."/>
            <person name="Roemer T."/>
            <person name="Ronning C.M."/>
            <person name="Sundaram J.P."/>
            <person name="Sutton G."/>
            <person name="Turner G."/>
            <person name="Venter J.C."/>
            <person name="White O.R."/>
            <person name="Whitty B.R."/>
            <person name="Youngman P."/>
            <person name="Wolfe K.H."/>
            <person name="Goldman G.H."/>
            <person name="Wortman J.R."/>
            <person name="Jiang B."/>
            <person name="Denning D.W."/>
            <person name="Nierman W.C."/>
        </authorList>
    </citation>
    <scope>NUCLEOTIDE SEQUENCE [LARGE SCALE GENOMIC DNA]</scope>
    <source>
        <strain>ATCC 1007 / CBS 513.65 / DSM 816 / NCTC 3887 / NRRL 1 / QM 1276 / 107</strain>
    </source>
</reference>
<proteinExistence type="inferred from homology"/>
<comment type="function">
    <text evidence="1">Sterol glycosyltransferase responsible for the glycosylation of ergosterol to form ergosterol-glucoside.</text>
</comment>
<comment type="catalytic activity">
    <reaction evidence="1">
        <text>a sterol + UDP-alpha-D-glucose = a sterol 3-beta-D-glucoside + UDP + H(+)</text>
        <dbReference type="Rhea" id="RHEA:22724"/>
        <dbReference type="ChEBI" id="CHEBI:15378"/>
        <dbReference type="ChEBI" id="CHEBI:15889"/>
        <dbReference type="ChEBI" id="CHEBI:37424"/>
        <dbReference type="ChEBI" id="CHEBI:58223"/>
        <dbReference type="ChEBI" id="CHEBI:58885"/>
        <dbReference type="EC" id="2.4.1.173"/>
    </reaction>
    <physiologicalReaction direction="left-to-right" evidence="1">
        <dbReference type="Rhea" id="RHEA:22725"/>
    </physiologicalReaction>
</comment>
<comment type="catalytic activity">
    <reaction evidence="1">
        <text>ergosterol + UDP-alpha-D-glucose = ergosteryl 3-beta-D-glucoside + UDP + H(+)</text>
        <dbReference type="Rhea" id="RHEA:61836"/>
        <dbReference type="ChEBI" id="CHEBI:15378"/>
        <dbReference type="ChEBI" id="CHEBI:16933"/>
        <dbReference type="ChEBI" id="CHEBI:52973"/>
        <dbReference type="ChEBI" id="CHEBI:58223"/>
        <dbReference type="ChEBI" id="CHEBI:58885"/>
    </reaction>
    <physiologicalReaction direction="left-to-right" evidence="1">
        <dbReference type="Rhea" id="RHEA:61837"/>
    </physiologicalReaction>
</comment>
<comment type="subcellular location">
    <subcellularLocation>
        <location evidence="1">Cytoplasm</location>
    </subcellularLocation>
    <subcellularLocation>
        <location evidence="2">Preautophagosomal structure membrane</location>
        <topology evidence="2">Peripheral membrane protein</topology>
    </subcellularLocation>
</comment>
<comment type="domain">
    <text evidence="2">The GRAM and PH domains are required for the localization of ATG26 to the preautophagosomal structure (PAS) and are involved in autophagy (By similarity).</text>
</comment>
<comment type="similarity">
    <text evidence="6">Belongs to the glycosyltransferase 28 family.</text>
</comment>
<protein>
    <recommendedName>
        <fullName evidence="6">Sterol 3-beta-glucosyltransferase</fullName>
        <ecNumber evidence="1">2.4.1.-</ecNumber>
        <ecNumber evidence="1">2.4.1.173</ecNumber>
    </recommendedName>
    <alternativeName>
        <fullName evidence="1">Autophagy-related protein 26</fullName>
    </alternativeName>
</protein>
<dbReference type="EC" id="2.4.1.-" evidence="1"/>
<dbReference type="EC" id="2.4.1.173" evidence="1"/>
<dbReference type="EMBL" id="DS027052">
    <property type="protein sequence ID" value="EAW11562.1"/>
    <property type="molecule type" value="Genomic_DNA"/>
</dbReference>
<dbReference type="RefSeq" id="XP_001272988.1">
    <property type="nucleotide sequence ID" value="XM_001272987.1"/>
</dbReference>
<dbReference type="SMR" id="A1CFB3"/>
<dbReference type="STRING" id="344612.A1CFB3"/>
<dbReference type="EnsemblFungi" id="EAW11562">
    <property type="protein sequence ID" value="EAW11562"/>
    <property type="gene ID" value="ACLA_092600"/>
</dbReference>
<dbReference type="GeneID" id="4705245"/>
<dbReference type="KEGG" id="act:ACLA_092600"/>
<dbReference type="VEuPathDB" id="FungiDB:ACLA_092600"/>
<dbReference type="eggNOG" id="KOG1192">
    <property type="taxonomic scope" value="Eukaryota"/>
</dbReference>
<dbReference type="HOGENOM" id="CLU_000537_6_0_1"/>
<dbReference type="OMA" id="WRNKTLG"/>
<dbReference type="OrthoDB" id="10261837at2759"/>
<dbReference type="Proteomes" id="UP000006701">
    <property type="component" value="Unassembled WGS sequence"/>
</dbReference>
<dbReference type="GO" id="GO:0034045">
    <property type="term" value="C:phagophore assembly site membrane"/>
    <property type="evidence" value="ECO:0007669"/>
    <property type="project" value="UniProtKB-SubCell"/>
</dbReference>
<dbReference type="GO" id="GO:0016906">
    <property type="term" value="F:sterol 3-beta-glucosyltransferase activity"/>
    <property type="evidence" value="ECO:0007669"/>
    <property type="project" value="UniProtKB-EC"/>
</dbReference>
<dbReference type="GO" id="GO:0006914">
    <property type="term" value="P:autophagy"/>
    <property type="evidence" value="ECO:0007669"/>
    <property type="project" value="UniProtKB-KW"/>
</dbReference>
<dbReference type="GO" id="GO:0005975">
    <property type="term" value="P:carbohydrate metabolic process"/>
    <property type="evidence" value="ECO:0007669"/>
    <property type="project" value="InterPro"/>
</dbReference>
<dbReference type="GO" id="GO:0030259">
    <property type="term" value="P:lipid glycosylation"/>
    <property type="evidence" value="ECO:0007669"/>
    <property type="project" value="InterPro"/>
</dbReference>
<dbReference type="GO" id="GO:0015031">
    <property type="term" value="P:protein transport"/>
    <property type="evidence" value="ECO:0007669"/>
    <property type="project" value="UniProtKB-KW"/>
</dbReference>
<dbReference type="GO" id="GO:0016126">
    <property type="term" value="P:sterol biosynthetic process"/>
    <property type="evidence" value="ECO:0007669"/>
    <property type="project" value="UniProtKB-KW"/>
</dbReference>
<dbReference type="CDD" id="cd03784">
    <property type="entry name" value="GT1_Gtf-like"/>
    <property type="match status" value="1"/>
</dbReference>
<dbReference type="CDD" id="cd13215">
    <property type="entry name" value="PH-GRAM1_AGT26"/>
    <property type="match status" value="1"/>
</dbReference>
<dbReference type="CDD" id="cd13216">
    <property type="entry name" value="PH-GRAM2_AGT26"/>
    <property type="match status" value="1"/>
</dbReference>
<dbReference type="FunFam" id="2.30.29.30:FF:000303">
    <property type="entry name" value="Sterol 3-beta-glucosyltransferase"/>
    <property type="match status" value="1"/>
</dbReference>
<dbReference type="FunFam" id="2.30.29.30:FF:000560">
    <property type="entry name" value="Sterol 3-beta-glucosyltransferase"/>
    <property type="match status" value="1"/>
</dbReference>
<dbReference type="FunFam" id="3.40.50.2000:FF:000029">
    <property type="entry name" value="Sterol 3-beta-glucosyltransferase"/>
    <property type="match status" value="1"/>
</dbReference>
<dbReference type="FunFam" id="3.40.50.2000:FF:000009">
    <property type="entry name" value="Sterol 3-beta-glucosyltransferase UGT80A2"/>
    <property type="match status" value="1"/>
</dbReference>
<dbReference type="Gene3D" id="3.40.50.2000">
    <property type="entry name" value="Glycogen Phosphorylase B"/>
    <property type="match status" value="2"/>
</dbReference>
<dbReference type="Gene3D" id="2.30.29.30">
    <property type="entry name" value="Pleckstrin-homology domain (PH domain)/Phosphotyrosine-binding domain (PTB)"/>
    <property type="match status" value="3"/>
</dbReference>
<dbReference type="InterPro" id="IPR048066">
    <property type="entry name" value="ATG26_PH_GRAM1"/>
</dbReference>
<dbReference type="InterPro" id="IPR048065">
    <property type="entry name" value="ATG26_PH_GRAM2"/>
</dbReference>
<dbReference type="InterPro" id="IPR010610">
    <property type="entry name" value="EryCIII-like_C"/>
</dbReference>
<dbReference type="InterPro" id="IPR050426">
    <property type="entry name" value="Glycosyltransferase_28"/>
</dbReference>
<dbReference type="InterPro" id="IPR004276">
    <property type="entry name" value="GlycoTrans_28_N"/>
</dbReference>
<dbReference type="InterPro" id="IPR004182">
    <property type="entry name" value="GRAM"/>
</dbReference>
<dbReference type="InterPro" id="IPR011993">
    <property type="entry name" value="PH-like_dom_sf"/>
</dbReference>
<dbReference type="InterPro" id="IPR001849">
    <property type="entry name" value="PH_domain"/>
</dbReference>
<dbReference type="InterPro" id="IPR002213">
    <property type="entry name" value="UDP_glucos_trans"/>
</dbReference>
<dbReference type="PANTHER" id="PTHR48050">
    <property type="entry name" value="STEROL 3-BETA-GLUCOSYLTRANSFERASE"/>
    <property type="match status" value="1"/>
</dbReference>
<dbReference type="PANTHER" id="PTHR48050:SF25">
    <property type="entry name" value="STEROL 3-BETA-GLUCOSYLTRANSFERASE"/>
    <property type="match status" value="1"/>
</dbReference>
<dbReference type="Pfam" id="PF06722">
    <property type="entry name" value="EryCIII-like_C"/>
    <property type="match status" value="1"/>
</dbReference>
<dbReference type="Pfam" id="PF03033">
    <property type="entry name" value="Glyco_transf_28"/>
    <property type="match status" value="1"/>
</dbReference>
<dbReference type="Pfam" id="PF02893">
    <property type="entry name" value="GRAM"/>
    <property type="match status" value="2"/>
</dbReference>
<dbReference type="Pfam" id="PF00169">
    <property type="entry name" value="PH"/>
    <property type="match status" value="1"/>
</dbReference>
<dbReference type="SMART" id="SM00568">
    <property type="entry name" value="GRAM"/>
    <property type="match status" value="2"/>
</dbReference>
<dbReference type="SMART" id="SM00233">
    <property type="entry name" value="PH"/>
    <property type="match status" value="1"/>
</dbReference>
<dbReference type="SUPFAM" id="SSF50729">
    <property type="entry name" value="PH domain-like"/>
    <property type="match status" value="1"/>
</dbReference>
<dbReference type="SUPFAM" id="SSF53756">
    <property type="entry name" value="UDP-Glycosyltransferase/glycogen phosphorylase"/>
    <property type="match status" value="1"/>
</dbReference>
<dbReference type="PROSITE" id="PS50003">
    <property type="entry name" value="PH_DOMAIN"/>
    <property type="match status" value="1"/>
</dbReference>